<protein>
    <recommendedName>
        <fullName evidence="1">Arginine--tRNA ligase</fullName>
        <ecNumber evidence="1">6.1.1.19</ecNumber>
    </recommendedName>
    <alternativeName>
        <fullName evidence="1">Arginyl-tRNA synthetase</fullName>
        <shortName evidence="1">ArgRS</shortName>
    </alternativeName>
</protein>
<comment type="catalytic activity">
    <reaction evidence="1">
        <text>tRNA(Arg) + L-arginine + ATP = L-arginyl-tRNA(Arg) + AMP + diphosphate</text>
        <dbReference type="Rhea" id="RHEA:20301"/>
        <dbReference type="Rhea" id="RHEA-COMP:9658"/>
        <dbReference type="Rhea" id="RHEA-COMP:9673"/>
        <dbReference type="ChEBI" id="CHEBI:30616"/>
        <dbReference type="ChEBI" id="CHEBI:32682"/>
        <dbReference type="ChEBI" id="CHEBI:33019"/>
        <dbReference type="ChEBI" id="CHEBI:78442"/>
        <dbReference type="ChEBI" id="CHEBI:78513"/>
        <dbReference type="ChEBI" id="CHEBI:456215"/>
        <dbReference type="EC" id="6.1.1.19"/>
    </reaction>
</comment>
<comment type="subunit">
    <text evidence="1">Monomer.</text>
</comment>
<comment type="subcellular location">
    <subcellularLocation>
        <location evidence="1">Cytoplasm</location>
    </subcellularLocation>
</comment>
<comment type="similarity">
    <text evidence="1">Belongs to the class-I aminoacyl-tRNA synthetase family.</text>
</comment>
<dbReference type="EC" id="6.1.1.19" evidence="1"/>
<dbReference type="EMBL" id="CP000468">
    <property type="protein sequence ID" value="ABJ01227.1"/>
    <property type="molecule type" value="Genomic_DNA"/>
</dbReference>
<dbReference type="RefSeq" id="WP_001025351.1">
    <property type="nucleotide sequence ID" value="NZ_CADILS010000028.1"/>
</dbReference>
<dbReference type="SMR" id="A1AC37"/>
<dbReference type="KEGG" id="ecv:APECO1_926"/>
<dbReference type="HOGENOM" id="CLU_006406_5_1_6"/>
<dbReference type="Proteomes" id="UP000008216">
    <property type="component" value="Chromosome"/>
</dbReference>
<dbReference type="GO" id="GO:0005737">
    <property type="term" value="C:cytoplasm"/>
    <property type="evidence" value="ECO:0007669"/>
    <property type="project" value="UniProtKB-SubCell"/>
</dbReference>
<dbReference type="GO" id="GO:0004814">
    <property type="term" value="F:arginine-tRNA ligase activity"/>
    <property type="evidence" value="ECO:0007669"/>
    <property type="project" value="UniProtKB-UniRule"/>
</dbReference>
<dbReference type="GO" id="GO:0005524">
    <property type="term" value="F:ATP binding"/>
    <property type="evidence" value="ECO:0007669"/>
    <property type="project" value="UniProtKB-UniRule"/>
</dbReference>
<dbReference type="GO" id="GO:0006420">
    <property type="term" value="P:arginyl-tRNA aminoacylation"/>
    <property type="evidence" value="ECO:0007669"/>
    <property type="project" value="UniProtKB-UniRule"/>
</dbReference>
<dbReference type="CDD" id="cd07956">
    <property type="entry name" value="Anticodon_Ia_Arg"/>
    <property type="match status" value="1"/>
</dbReference>
<dbReference type="CDD" id="cd00671">
    <property type="entry name" value="ArgRS_core"/>
    <property type="match status" value="1"/>
</dbReference>
<dbReference type="FunFam" id="1.10.730.10:FF:000001">
    <property type="entry name" value="Arginine--tRNA ligase"/>
    <property type="match status" value="1"/>
</dbReference>
<dbReference type="FunFam" id="3.30.1360.70:FF:000001">
    <property type="entry name" value="Arginine--tRNA ligase"/>
    <property type="match status" value="1"/>
</dbReference>
<dbReference type="FunFam" id="3.40.50.620:FF:000030">
    <property type="entry name" value="Arginine--tRNA ligase"/>
    <property type="match status" value="1"/>
</dbReference>
<dbReference type="Gene3D" id="3.30.1360.70">
    <property type="entry name" value="Arginyl tRNA synthetase N-terminal domain"/>
    <property type="match status" value="1"/>
</dbReference>
<dbReference type="Gene3D" id="3.40.50.620">
    <property type="entry name" value="HUPs"/>
    <property type="match status" value="1"/>
</dbReference>
<dbReference type="Gene3D" id="1.10.730.10">
    <property type="entry name" value="Isoleucyl-tRNA Synthetase, Domain 1"/>
    <property type="match status" value="1"/>
</dbReference>
<dbReference type="HAMAP" id="MF_00123">
    <property type="entry name" value="Arg_tRNA_synth"/>
    <property type="match status" value="1"/>
</dbReference>
<dbReference type="InterPro" id="IPR001412">
    <property type="entry name" value="aa-tRNA-synth_I_CS"/>
</dbReference>
<dbReference type="InterPro" id="IPR001278">
    <property type="entry name" value="Arg-tRNA-ligase"/>
</dbReference>
<dbReference type="InterPro" id="IPR005148">
    <property type="entry name" value="Arg-tRNA-synth_N"/>
</dbReference>
<dbReference type="InterPro" id="IPR036695">
    <property type="entry name" value="Arg-tRNA-synth_N_sf"/>
</dbReference>
<dbReference type="InterPro" id="IPR035684">
    <property type="entry name" value="ArgRS_core"/>
</dbReference>
<dbReference type="InterPro" id="IPR008909">
    <property type="entry name" value="DALR_anticod-bd"/>
</dbReference>
<dbReference type="InterPro" id="IPR014729">
    <property type="entry name" value="Rossmann-like_a/b/a_fold"/>
</dbReference>
<dbReference type="InterPro" id="IPR009080">
    <property type="entry name" value="tRNAsynth_Ia_anticodon-bd"/>
</dbReference>
<dbReference type="NCBIfam" id="TIGR00456">
    <property type="entry name" value="argS"/>
    <property type="match status" value="1"/>
</dbReference>
<dbReference type="PANTHER" id="PTHR11956:SF5">
    <property type="entry name" value="ARGININE--TRNA LIGASE, CYTOPLASMIC"/>
    <property type="match status" value="1"/>
</dbReference>
<dbReference type="PANTHER" id="PTHR11956">
    <property type="entry name" value="ARGINYL-TRNA SYNTHETASE"/>
    <property type="match status" value="1"/>
</dbReference>
<dbReference type="Pfam" id="PF03485">
    <property type="entry name" value="Arg_tRNA_synt_N"/>
    <property type="match status" value="1"/>
</dbReference>
<dbReference type="Pfam" id="PF05746">
    <property type="entry name" value="DALR_1"/>
    <property type="match status" value="1"/>
</dbReference>
<dbReference type="Pfam" id="PF00750">
    <property type="entry name" value="tRNA-synt_1d"/>
    <property type="match status" value="1"/>
</dbReference>
<dbReference type="PRINTS" id="PR01038">
    <property type="entry name" value="TRNASYNTHARG"/>
</dbReference>
<dbReference type="SMART" id="SM01016">
    <property type="entry name" value="Arg_tRNA_synt_N"/>
    <property type="match status" value="1"/>
</dbReference>
<dbReference type="SMART" id="SM00836">
    <property type="entry name" value="DALR_1"/>
    <property type="match status" value="1"/>
</dbReference>
<dbReference type="SUPFAM" id="SSF47323">
    <property type="entry name" value="Anticodon-binding domain of a subclass of class I aminoacyl-tRNA synthetases"/>
    <property type="match status" value="1"/>
</dbReference>
<dbReference type="SUPFAM" id="SSF55190">
    <property type="entry name" value="Arginyl-tRNA synthetase (ArgRS), N-terminal 'additional' domain"/>
    <property type="match status" value="1"/>
</dbReference>
<dbReference type="SUPFAM" id="SSF52374">
    <property type="entry name" value="Nucleotidylyl transferase"/>
    <property type="match status" value="1"/>
</dbReference>
<dbReference type="PROSITE" id="PS00178">
    <property type="entry name" value="AA_TRNA_LIGASE_I"/>
    <property type="match status" value="1"/>
</dbReference>
<proteinExistence type="inferred from homology"/>
<name>SYR_ECOK1</name>
<organism>
    <name type="scientific">Escherichia coli O1:K1 / APEC</name>
    <dbReference type="NCBI Taxonomy" id="405955"/>
    <lineage>
        <taxon>Bacteria</taxon>
        <taxon>Pseudomonadati</taxon>
        <taxon>Pseudomonadota</taxon>
        <taxon>Gammaproteobacteria</taxon>
        <taxon>Enterobacterales</taxon>
        <taxon>Enterobacteriaceae</taxon>
        <taxon>Escherichia</taxon>
    </lineage>
</organism>
<gene>
    <name evidence="1" type="primary">argS</name>
    <name type="ordered locus">Ecok1_17330</name>
    <name type="ORF">APECO1_926</name>
</gene>
<keyword id="KW-0030">Aminoacyl-tRNA synthetase</keyword>
<keyword id="KW-0067">ATP-binding</keyword>
<keyword id="KW-0963">Cytoplasm</keyword>
<keyword id="KW-0436">Ligase</keyword>
<keyword id="KW-0547">Nucleotide-binding</keyword>
<keyword id="KW-0648">Protein biosynthesis</keyword>
<keyword id="KW-1185">Reference proteome</keyword>
<sequence>MNIQALLSEKVRQAMIAAGAPADCEPQVRQSAKVQFGNYQANGMMAVAKKLGMAPRQLAEQVLTHLDLNGIASKVEIAGPGFINIFLDPAFLAEHVQQALASDRLGVAMPEKQTIVVDYSAPNVAKEMHVGHLRSTIIGDAAVRTLEFLGHKVIRANHVGDWGTQFGMLIAWLEKQQQENAGEMELADLEGFYRDAKKHYDEDEEFAERARNYVVKLQSGDEYFREMWRKLVDITMTQNQITYDRLNVTLTRDDVMGESLYNPMLPGIVADLKAKGLAVESEGATVVFLDEFKNKEGEPMGVIIQKKDGGYLYTTTDIACAKYRYETLHADRVLYYIDSRQHQHLMQAWAIVRKAGYVPESVPLEHHMFGMMLGKDGKPFKTRAGGTVKLADLLDEALERARRLVAEKNPDMPADELEKLANAVGIGAVKYADLSKNRTTDYIFDWDNMLAFEGNTAPYMQYAYTRVLSVFRKAEIDEEQLAAAPVIIREDREAQLAARLLQFEETLTVVAREGTPHVMCAYLYDLAGLFSGFYEHCPILSAENEEVRNSRLKLAQLTAKTLKLGLDTLGIETVERM</sequence>
<accession>A1AC37</accession>
<reference key="1">
    <citation type="journal article" date="2007" name="J. Bacteriol.">
        <title>The genome sequence of avian pathogenic Escherichia coli strain O1:K1:H7 shares strong similarities with human extraintestinal pathogenic E. coli genomes.</title>
        <authorList>
            <person name="Johnson T.J."/>
            <person name="Kariyawasam S."/>
            <person name="Wannemuehler Y."/>
            <person name="Mangiamele P."/>
            <person name="Johnson S.J."/>
            <person name="Doetkott C."/>
            <person name="Skyberg J.A."/>
            <person name="Lynne A.M."/>
            <person name="Johnson J.R."/>
            <person name="Nolan L.K."/>
        </authorList>
    </citation>
    <scope>NUCLEOTIDE SEQUENCE [LARGE SCALE GENOMIC DNA]</scope>
</reference>
<feature type="chain" id="PRO_1000018023" description="Arginine--tRNA ligase">
    <location>
        <begin position="1"/>
        <end position="577"/>
    </location>
</feature>
<feature type="short sequence motif" description="'HIGH' region">
    <location>
        <begin position="122"/>
        <end position="132"/>
    </location>
</feature>
<evidence type="ECO:0000255" key="1">
    <source>
        <dbReference type="HAMAP-Rule" id="MF_00123"/>
    </source>
</evidence>